<protein>
    <recommendedName>
        <fullName evidence="1">Peptide chain release factor 1</fullName>
        <shortName evidence="1">RF-1</shortName>
    </recommendedName>
</protein>
<feature type="chain" id="PRO_1000117238" description="Peptide chain release factor 1">
    <location>
        <begin position="1"/>
        <end position="360"/>
    </location>
</feature>
<feature type="region of interest" description="Disordered" evidence="2">
    <location>
        <begin position="284"/>
        <end position="313"/>
    </location>
</feature>
<feature type="modified residue" description="N5-methylglutamine" evidence="1">
    <location>
        <position position="235"/>
    </location>
</feature>
<organism>
    <name type="scientific">Escherichia coli O45:K1 (strain S88 / ExPEC)</name>
    <dbReference type="NCBI Taxonomy" id="585035"/>
    <lineage>
        <taxon>Bacteria</taxon>
        <taxon>Pseudomonadati</taxon>
        <taxon>Pseudomonadota</taxon>
        <taxon>Gammaproteobacteria</taxon>
        <taxon>Enterobacterales</taxon>
        <taxon>Enterobacteriaceae</taxon>
        <taxon>Escherichia</taxon>
    </lineage>
</organism>
<sequence>MKPSIVAKLEALHERHEEVQALLGDAQTIADQERFRALSREYAQLSDVSRCFTDWQQVQEDIETAQMMLDDPEMREMAQDELREAKEKSEQLEQQLQVLLLPKDPDDERNAFLEVRAGTGGDEAALFAGDLFRMYSRYAEARRWRVEIMSASEGEHGGYKEIIAKISGDGVYGRLKFESGGHRVQRVPATESQGRIHTSACTVAVMPELPDAELPDINPADLRIDTFRSSGAGGQHVNTTDSAIRITHLPTGIVVECQDERSQHKNKAKALSVLGARIHAAEMAKRQQAEASTRRNLLGSGDRSDRNRTYNFPQGRVTDHRINLTLYRLDEVMEGKLDMLIEPIIQEHQADQLAALSEQE</sequence>
<gene>
    <name evidence="1" type="primary">prfA</name>
    <name type="ordered locus">ECS88_1279</name>
</gene>
<name>RF1_ECO45</name>
<evidence type="ECO:0000255" key="1">
    <source>
        <dbReference type="HAMAP-Rule" id="MF_00093"/>
    </source>
</evidence>
<evidence type="ECO:0000256" key="2">
    <source>
        <dbReference type="SAM" id="MobiDB-lite"/>
    </source>
</evidence>
<dbReference type="EMBL" id="CU928161">
    <property type="protein sequence ID" value="CAR02605.1"/>
    <property type="molecule type" value="Genomic_DNA"/>
</dbReference>
<dbReference type="RefSeq" id="WP_000804726.1">
    <property type="nucleotide sequence ID" value="NC_011742.1"/>
</dbReference>
<dbReference type="EMDB" id="EMD-7970"/>
<dbReference type="SMR" id="B7MKB3"/>
<dbReference type="IntAct" id="B7MKB3">
    <property type="interactions" value="1"/>
</dbReference>
<dbReference type="GeneID" id="93775276"/>
<dbReference type="KEGG" id="ecz:ECS88_1279"/>
<dbReference type="HOGENOM" id="CLU_036856_0_1_6"/>
<dbReference type="Proteomes" id="UP000000747">
    <property type="component" value="Chromosome"/>
</dbReference>
<dbReference type="GO" id="GO:0005737">
    <property type="term" value="C:cytoplasm"/>
    <property type="evidence" value="ECO:0007669"/>
    <property type="project" value="UniProtKB-SubCell"/>
</dbReference>
<dbReference type="GO" id="GO:0016149">
    <property type="term" value="F:translation release factor activity, codon specific"/>
    <property type="evidence" value="ECO:0007669"/>
    <property type="project" value="UniProtKB-UniRule"/>
</dbReference>
<dbReference type="FunFam" id="3.30.160.20:FF:000004">
    <property type="entry name" value="Peptide chain release factor 1"/>
    <property type="match status" value="1"/>
</dbReference>
<dbReference type="FunFam" id="3.30.70.1660:FF:000002">
    <property type="entry name" value="Peptide chain release factor 1"/>
    <property type="match status" value="1"/>
</dbReference>
<dbReference type="FunFam" id="3.30.70.1660:FF:000004">
    <property type="entry name" value="Peptide chain release factor 1"/>
    <property type="match status" value="1"/>
</dbReference>
<dbReference type="Gene3D" id="3.30.160.20">
    <property type="match status" value="1"/>
</dbReference>
<dbReference type="Gene3D" id="3.30.70.1660">
    <property type="match status" value="1"/>
</dbReference>
<dbReference type="Gene3D" id="6.10.140.1950">
    <property type="match status" value="1"/>
</dbReference>
<dbReference type="HAMAP" id="MF_00093">
    <property type="entry name" value="Rel_fac_1"/>
    <property type="match status" value="1"/>
</dbReference>
<dbReference type="InterPro" id="IPR005139">
    <property type="entry name" value="PCRF"/>
</dbReference>
<dbReference type="InterPro" id="IPR000352">
    <property type="entry name" value="Pep_chain_release_fac_I"/>
</dbReference>
<dbReference type="InterPro" id="IPR045853">
    <property type="entry name" value="Pep_chain_release_fac_I_sf"/>
</dbReference>
<dbReference type="InterPro" id="IPR050057">
    <property type="entry name" value="Prokaryotic/Mito_RF"/>
</dbReference>
<dbReference type="InterPro" id="IPR004373">
    <property type="entry name" value="RF-1"/>
</dbReference>
<dbReference type="NCBIfam" id="TIGR00019">
    <property type="entry name" value="prfA"/>
    <property type="match status" value="1"/>
</dbReference>
<dbReference type="NCBIfam" id="NF001859">
    <property type="entry name" value="PRK00591.1"/>
    <property type="match status" value="1"/>
</dbReference>
<dbReference type="PANTHER" id="PTHR43804">
    <property type="entry name" value="LD18447P"/>
    <property type="match status" value="1"/>
</dbReference>
<dbReference type="PANTHER" id="PTHR43804:SF7">
    <property type="entry name" value="LD18447P"/>
    <property type="match status" value="1"/>
</dbReference>
<dbReference type="Pfam" id="PF03462">
    <property type="entry name" value="PCRF"/>
    <property type="match status" value="1"/>
</dbReference>
<dbReference type="Pfam" id="PF00472">
    <property type="entry name" value="RF-1"/>
    <property type="match status" value="1"/>
</dbReference>
<dbReference type="SMART" id="SM00937">
    <property type="entry name" value="PCRF"/>
    <property type="match status" value="1"/>
</dbReference>
<dbReference type="SUPFAM" id="SSF75620">
    <property type="entry name" value="Release factor"/>
    <property type="match status" value="1"/>
</dbReference>
<dbReference type="PROSITE" id="PS00745">
    <property type="entry name" value="RF_PROK_I"/>
    <property type="match status" value="1"/>
</dbReference>
<keyword id="KW-0963">Cytoplasm</keyword>
<keyword id="KW-0488">Methylation</keyword>
<keyword id="KW-0648">Protein biosynthesis</keyword>
<keyword id="KW-1185">Reference proteome</keyword>
<comment type="function">
    <text evidence="1">Peptide chain release factor 1 directs the termination of translation in response to the peptide chain termination codons UAG and UAA.</text>
</comment>
<comment type="subcellular location">
    <subcellularLocation>
        <location evidence="1">Cytoplasm</location>
    </subcellularLocation>
</comment>
<comment type="PTM">
    <text evidence="1">Methylated by PrmC. Methylation increases the termination efficiency of RF1.</text>
</comment>
<comment type="similarity">
    <text evidence="1">Belongs to the prokaryotic/mitochondrial release factor family.</text>
</comment>
<accession>B7MKB3</accession>
<proteinExistence type="inferred from homology"/>
<reference key="1">
    <citation type="journal article" date="2009" name="PLoS Genet.">
        <title>Organised genome dynamics in the Escherichia coli species results in highly diverse adaptive paths.</title>
        <authorList>
            <person name="Touchon M."/>
            <person name="Hoede C."/>
            <person name="Tenaillon O."/>
            <person name="Barbe V."/>
            <person name="Baeriswyl S."/>
            <person name="Bidet P."/>
            <person name="Bingen E."/>
            <person name="Bonacorsi S."/>
            <person name="Bouchier C."/>
            <person name="Bouvet O."/>
            <person name="Calteau A."/>
            <person name="Chiapello H."/>
            <person name="Clermont O."/>
            <person name="Cruveiller S."/>
            <person name="Danchin A."/>
            <person name="Diard M."/>
            <person name="Dossat C."/>
            <person name="Karoui M.E."/>
            <person name="Frapy E."/>
            <person name="Garry L."/>
            <person name="Ghigo J.M."/>
            <person name="Gilles A.M."/>
            <person name="Johnson J."/>
            <person name="Le Bouguenec C."/>
            <person name="Lescat M."/>
            <person name="Mangenot S."/>
            <person name="Martinez-Jehanne V."/>
            <person name="Matic I."/>
            <person name="Nassif X."/>
            <person name="Oztas S."/>
            <person name="Petit M.A."/>
            <person name="Pichon C."/>
            <person name="Rouy Z."/>
            <person name="Ruf C.S."/>
            <person name="Schneider D."/>
            <person name="Tourret J."/>
            <person name="Vacherie B."/>
            <person name="Vallenet D."/>
            <person name="Medigue C."/>
            <person name="Rocha E.P.C."/>
            <person name="Denamur E."/>
        </authorList>
    </citation>
    <scope>NUCLEOTIDE SEQUENCE [LARGE SCALE GENOMIC DNA]</scope>
    <source>
        <strain>S88 / ExPEC</strain>
    </source>
</reference>